<evidence type="ECO:0000250" key="1"/>
<evidence type="ECO:0000255" key="2">
    <source>
        <dbReference type="PROSITE-ProRule" id="PRU00457"/>
    </source>
</evidence>
<evidence type="ECO:0000255" key="3">
    <source>
        <dbReference type="PROSITE-ProRule" id="PRU10094"/>
    </source>
</evidence>
<evidence type="ECO:0000256" key="4">
    <source>
        <dbReference type="SAM" id="MobiDB-lite"/>
    </source>
</evidence>
<accession>Q12112</accession>
<accession>D6W0Q8</accession>
<reference key="1">
    <citation type="journal article" date="1997" name="Nature">
        <title>The nucleotide sequence of Saccharomyces cerevisiae chromosome XIV and its evolutionary implications.</title>
        <authorList>
            <person name="Philippsen P."/>
            <person name="Kleine K."/>
            <person name="Poehlmann R."/>
            <person name="Duesterhoeft A."/>
            <person name="Hamberg K."/>
            <person name="Hegemann J.H."/>
            <person name="Obermaier B."/>
            <person name="Urrestarazu L.A."/>
            <person name="Aert R."/>
            <person name="Albermann K."/>
            <person name="Altmann R."/>
            <person name="Andre B."/>
            <person name="Baladron V."/>
            <person name="Ballesta J.P.G."/>
            <person name="Becam A.-M."/>
            <person name="Beinhauer J.D."/>
            <person name="Boskovic J."/>
            <person name="Buitrago M.J."/>
            <person name="Bussereau F."/>
            <person name="Coster F."/>
            <person name="Crouzet M."/>
            <person name="D'Angelo M."/>
            <person name="Dal Pero F."/>
            <person name="De Antoni A."/>
            <person name="del Rey F."/>
            <person name="Doignon F."/>
            <person name="Domdey H."/>
            <person name="Dubois E."/>
            <person name="Fiedler T.A."/>
            <person name="Fleig U."/>
            <person name="Floeth M."/>
            <person name="Fritz C."/>
            <person name="Gaillardin C."/>
            <person name="Garcia-Cantalejo J.M."/>
            <person name="Glansdorff N."/>
            <person name="Goffeau A."/>
            <person name="Gueldener U."/>
            <person name="Herbert C.J."/>
            <person name="Heumann K."/>
            <person name="Heuss-Neitzel D."/>
            <person name="Hilbert H."/>
            <person name="Hinni K."/>
            <person name="Iraqui Houssaini I."/>
            <person name="Jacquet M."/>
            <person name="Jimenez A."/>
            <person name="Jonniaux J.-L."/>
            <person name="Karpfinger-Hartl L."/>
            <person name="Lanfranchi G."/>
            <person name="Lepingle A."/>
            <person name="Levesque H."/>
            <person name="Lyck R."/>
            <person name="Maftahi M."/>
            <person name="Mallet L."/>
            <person name="Maurer C.T.C."/>
            <person name="Messenguy F."/>
            <person name="Mewes H.-W."/>
            <person name="Moestl D."/>
            <person name="Nasr F."/>
            <person name="Nicaud J.-M."/>
            <person name="Niedenthal R.K."/>
            <person name="Pandolfo D."/>
            <person name="Pierard A."/>
            <person name="Piravandi E."/>
            <person name="Planta R.J."/>
            <person name="Pohl T.M."/>
            <person name="Purnelle B."/>
            <person name="Rebischung C."/>
            <person name="Remacha M.A."/>
            <person name="Revuelta J.L."/>
            <person name="Rinke M."/>
            <person name="Saiz J.E."/>
            <person name="Sartorello F."/>
            <person name="Scherens B."/>
            <person name="Sen-Gupta M."/>
            <person name="Soler-Mira A."/>
            <person name="Urbanus J.H.M."/>
            <person name="Valle G."/>
            <person name="Van Dyck L."/>
            <person name="Verhasselt P."/>
            <person name="Vierendeels F."/>
            <person name="Vissers S."/>
            <person name="Voet M."/>
            <person name="Volckaert G."/>
            <person name="Wach A."/>
            <person name="Wambutt R."/>
            <person name="Wedler H."/>
            <person name="Zollner A."/>
            <person name="Hani J."/>
        </authorList>
    </citation>
    <scope>NUCLEOTIDE SEQUENCE [LARGE SCALE GENOMIC DNA]</scope>
    <source>
        <strain>ATCC 204508 / S288c</strain>
    </source>
</reference>
<reference key="2">
    <citation type="journal article" date="2014" name="G3 (Bethesda)">
        <title>The reference genome sequence of Saccharomyces cerevisiae: Then and now.</title>
        <authorList>
            <person name="Engel S.R."/>
            <person name="Dietrich F.S."/>
            <person name="Fisk D.G."/>
            <person name="Binkley G."/>
            <person name="Balakrishnan R."/>
            <person name="Costanzo M.C."/>
            <person name="Dwight S.S."/>
            <person name="Hitz B.C."/>
            <person name="Karra K."/>
            <person name="Nash R.S."/>
            <person name="Weng S."/>
            <person name="Wong E.D."/>
            <person name="Lloyd P."/>
            <person name="Skrzypek M.S."/>
            <person name="Miyasato S.R."/>
            <person name="Simison M."/>
            <person name="Cherry J.M."/>
        </authorList>
    </citation>
    <scope>GENOME REANNOTATION</scope>
    <source>
        <strain>ATCC 204508 / S288c</strain>
    </source>
</reference>
<reference key="3">
    <citation type="journal article" date="1998" name="Genome Res.">
        <title>Transposable elements and genome organization: a comprehensive survey of retrotransposons revealed by the complete Saccharomyces cerevisiae genome sequence.</title>
        <authorList>
            <person name="Kim J.M."/>
            <person name="Vanguri S."/>
            <person name="Boeke J.D."/>
            <person name="Gabriel A."/>
            <person name="Voytas D.F."/>
        </authorList>
    </citation>
    <scope>NOMENCLATURE</scope>
</reference>
<reference key="4">
    <citation type="journal article" date="2005" name="Cytogenet. Genome Res.">
        <title>Happy together: the life and times of Ty retrotransposons and their hosts.</title>
        <authorList>
            <person name="Lesage P."/>
            <person name="Todeschini A.L."/>
        </authorList>
    </citation>
    <scope>REVIEW</scope>
</reference>
<reference key="5">
    <citation type="journal article" date="2005" name="Cytogenet. Genome Res.">
        <title>Reverse transcriptase and integrase of the Saccharomyces cerevisiae Ty1 element.</title>
        <authorList>
            <person name="Wilhelm F.-X."/>
            <person name="Wilhelm M."/>
            <person name="Gabriel A."/>
        </authorList>
    </citation>
    <scope>REVIEW</scope>
    <scope>DOMAINS</scope>
</reference>
<proteinExistence type="inferred from homology"/>
<comment type="function">
    <text evidence="1">Capsid protein (CA) is the structural component of the virus-like particle (VLP), forming the shell that encapsulates the retrotransposons dimeric RNA genome. The particles are assembled from trimer-clustered units and there are holes in the capsid shells that allow for the diffusion of macromolecules. CA also has nucleocapsid-like chaperone activity, promoting primer tRNA(i)-Met annealing to the multipartite primer-binding site (PBS), dimerization of Ty1 RNA and initiation of reverse transcription (By similarity).</text>
</comment>
<comment type="function">
    <text evidence="1">The aspartyl protease (PR) mediates the proteolytic cleavages of the Gag and Gag-Pol polyproteins after assembly of the VLP.</text>
</comment>
<comment type="function">
    <text evidence="1">Reverse transcriptase/ribonuclease H (RT) is a multifunctional enzyme that catalyzes the conversion of the retro-elements RNA genome into dsDNA within the VLP. The enzyme displays a DNA polymerase activity that can copy either DNA or RNA templates, and a ribonuclease H (RNase H) activity that cleaves the RNA strand of RNA-DNA heteroduplexes during plus-strand synthesis and hydrolyzes RNA primers. The conversion leads to a linear dsDNA copy of the retrotransposon that includes long terminal repeats (LTRs) at both ends (By similarity).</text>
</comment>
<comment type="function">
    <text evidence="1">Integrase (IN) targets the VLP to the nucleus, where a subparticle preintegration complex (PIC) containing at least integrase and the newly synthesized dsDNA copy of the retrotransposon must transit the nuclear membrane. Once in the nucleus, integrase performs the integration of the dsDNA into the host genome (By similarity).</text>
</comment>
<comment type="catalytic activity">
    <reaction>
        <text>DNA(n) + a 2'-deoxyribonucleoside 5'-triphosphate = DNA(n+1) + diphosphate</text>
        <dbReference type="Rhea" id="RHEA:22508"/>
        <dbReference type="Rhea" id="RHEA-COMP:17339"/>
        <dbReference type="Rhea" id="RHEA-COMP:17340"/>
        <dbReference type="ChEBI" id="CHEBI:33019"/>
        <dbReference type="ChEBI" id="CHEBI:61560"/>
        <dbReference type="ChEBI" id="CHEBI:173112"/>
        <dbReference type="EC" id="2.7.7.49"/>
    </reaction>
</comment>
<comment type="catalytic activity">
    <reaction>
        <text>DNA(n) + a 2'-deoxyribonucleoside 5'-triphosphate = DNA(n+1) + diphosphate</text>
        <dbReference type="Rhea" id="RHEA:22508"/>
        <dbReference type="Rhea" id="RHEA-COMP:17339"/>
        <dbReference type="Rhea" id="RHEA-COMP:17340"/>
        <dbReference type="ChEBI" id="CHEBI:33019"/>
        <dbReference type="ChEBI" id="CHEBI:61560"/>
        <dbReference type="ChEBI" id="CHEBI:173112"/>
        <dbReference type="EC" id="2.7.7.7"/>
    </reaction>
</comment>
<comment type="catalytic activity">
    <reaction>
        <text>Endonucleolytic cleavage to 5'-phosphomonoester.</text>
        <dbReference type="EC" id="3.1.26.4"/>
    </reaction>
</comment>
<comment type="subunit">
    <text evidence="1">The capsid protein forms a homotrimer, from which the VLPs are assembled. The protease is a homodimer, whose active site consists of two apposed aspartic acid residues (By similarity).</text>
</comment>
<comment type="subcellular location">
    <subcellularLocation>
        <location>Cytoplasm</location>
    </subcellularLocation>
    <subcellularLocation>
        <location evidence="1">Nucleus</location>
    </subcellularLocation>
</comment>
<comment type="alternative products">
    <event type="ribosomal frameshifting"/>
    <isoform>
        <id>Q12112-1</id>
        <name>Transposon Ty1-NL1 Gag-Pol polyprotein</name>
        <sequence type="displayed"/>
    </isoform>
    <isoform>
        <id>Q12391-1</id>
        <name>Transposon Ty1-NL1 Gag polyprotein</name>
        <sequence type="external"/>
    </isoform>
    <text evidence="1">The Gag-Pol polyprotein is generated by a +1 ribosomal frameshift. The ratio of Gag:Gag-Pol varies between 20:1 and 5:1 (By similarity).</text>
</comment>
<comment type="domain">
    <text evidence="1">The C-terminal RNA-binding region of CA is sufficient for all its nucleocapsid-like chaperone activities.</text>
</comment>
<comment type="domain">
    <text evidence="1">Integrase core domain contains the D-x(n)-D-x(35)-E motif, named for the phylogenetically conserved glutamic acid and aspartic acid residues and the invariant 35 amino acid spacing between the second and third acidic residues. Each acidic residue of the D,D(35)E motif is independently essential for the 3'-processing and strand transfer activities of purified integrase protein (By similarity).</text>
</comment>
<comment type="PTM">
    <text evidence="1">Initially, virus-like particles (VLPs) are composed of the structural unprocessed proteins Gag and Gag-Pol, and also contain the host initiator methionine tRNA (tRNA(i)-Met) which serves as a primer for minus-strand DNA synthesis, and a dimer of genomic Ty RNA. Processing of the polyproteins occurs within the particle and proceeds by an ordered pathway, called maturation. First, the protease (PR) is released by autocatalytic cleavage of the Gag-Pol polyprotein yielding capsid protein p45 and a Pol-p154 precursor protein. This cleavage is a prerequisite for subsequent processing of Pol-p154 at the remaining sites to release the mature structural and catalytic proteins. Maturation takes place prior to the RT reaction and is required to produce transposition-competent VLPs (By similarity).</text>
</comment>
<comment type="miscellaneous">
    <text>Retrotransposons are mobile genetic entities that are able to replicate via an RNA intermediate and a reverse transcription step. In contrast to retroviruses, retrotransposons are non-infectious, lack an envelope and remain intracellular. Ty1 retrotransposons belong to the copia elements (pseudoviridae).</text>
</comment>
<comment type="miscellaneous">
    <molecule>Isoform Transposon Ty1-NL1 Gag-Pol polyprotein</molecule>
    <text>Produced by +1 ribosomal frameshifting between codon Leu-435 and Gly-436 of the YNL284C-A ORF.</text>
</comment>
<gene>
    <name type="primary">TY1B-NL1</name>
    <name type="synonym">YNLCTy1-1 POL</name>
    <name type="ordered locus">YNL284C-B</name>
    <name type="ORF">N0564</name>
</gene>
<keyword id="KW-0064">Aspartyl protease</keyword>
<keyword id="KW-0067">ATP-binding</keyword>
<keyword id="KW-0963">Cytoplasm</keyword>
<keyword id="KW-0229">DNA integration</keyword>
<keyword id="KW-0233">DNA recombination</keyword>
<keyword id="KW-0238">DNA-binding</keyword>
<keyword id="KW-0239">DNA-directed DNA polymerase</keyword>
<keyword id="KW-0255">Endonuclease</keyword>
<keyword id="KW-0378">Hydrolase</keyword>
<keyword id="KW-0460">Magnesium</keyword>
<keyword id="KW-0479">Metal-binding</keyword>
<keyword id="KW-0511">Multifunctional enzyme</keyword>
<keyword id="KW-0540">Nuclease</keyword>
<keyword id="KW-0547">Nucleotide-binding</keyword>
<keyword id="KW-0548">Nucleotidyltransferase</keyword>
<keyword id="KW-0539">Nucleus</keyword>
<keyword id="KW-0645">Protease</keyword>
<keyword id="KW-1185">Reference proteome</keyword>
<keyword id="KW-0688">Ribosomal frameshifting</keyword>
<keyword id="KW-0694">RNA-binding</keyword>
<keyword id="KW-0695">RNA-directed DNA polymerase</keyword>
<keyword id="KW-0808">Transferase</keyword>
<keyword id="KW-0814">Transposable element</keyword>
<keyword id="KW-0815">Transposition</keyword>
<keyword id="KW-1188">Viral release from host cell</keyword>
<keyword id="KW-0917">Virion maturation</keyword>
<keyword id="KW-0862">Zinc</keyword>
<keyword id="KW-0863">Zinc-finger</keyword>
<name>YN11B_YEAST</name>
<feature type="chain" id="PRO_0000279137" description="Transposon Ty1-NL1 Gag-Pol polyprotein">
    <location>
        <begin position="1"/>
        <end position="1755"/>
    </location>
</feature>
<feature type="chain" id="PRO_0000279138" description="Capsid protein" evidence="1">
    <location>
        <begin position="1"/>
        <end position="401"/>
    </location>
</feature>
<feature type="chain" id="PRO_0000279139" description="Ty1 protease" evidence="1">
    <location>
        <begin position="402"/>
        <end position="582"/>
    </location>
</feature>
<feature type="chain" id="PRO_0000279140" description="Integrase" evidence="1">
    <location>
        <begin position="583"/>
        <end position="1217"/>
    </location>
</feature>
<feature type="chain" id="PRO_0000279141" description="Reverse transcriptase/ribonuclease H" evidence="1">
    <location>
        <begin position="1218"/>
        <end position="1755"/>
    </location>
</feature>
<feature type="domain" description="Integrase catalytic" evidence="2">
    <location>
        <begin position="660"/>
        <end position="835"/>
    </location>
</feature>
<feature type="domain" description="Reverse transcriptase Ty1/copia-type">
    <location>
        <begin position="1338"/>
        <end position="1476"/>
    </location>
</feature>
<feature type="domain" description="RNase H Ty1/copia-type">
    <location>
        <begin position="1610"/>
        <end position="1752"/>
    </location>
</feature>
<feature type="region of interest" description="Disordered" evidence="4">
    <location>
        <begin position="1"/>
        <end position="86"/>
    </location>
</feature>
<feature type="region of interest" description="Disordered" evidence="4">
    <location>
        <begin position="131"/>
        <end position="171"/>
    </location>
</feature>
<feature type="region of interest" description="RNA-binding" evidence="1">
    <location>
        <begin position="299"/>
        <end position="401"/>
    </location>
</feature>
<feature type="region of interest" description="Disordered" evidence="4">
    <location>
        <begin position="350"/>
        <end position="420"/>
    </location>
</feature>
<feature type="region of interest" description="Integrase-type zinc finger-like">
    <location>
        <begin position="583"/>
        <end position="640"/>
    </location>
</feature>
<feature type="region of interest" description="Disordered" evidence="4">
    <location>
        <begin position="956"/>
        <end position="1120"/>
    </location>
</feature>
<feature type="region of interest" description="Disordered" evidence="4">
    <location>
        <begin position="1146"/>
        <end position="1172"/>
    </location>
</feature>
<feature type="short sequence motif" description="Bipartite nuclear localization signal" evidence="1">
    <location>
        <begin position="1178"/>
        <end position="1212"/>
    </location>
</feature>
<feature type="compositionally biased region" description="Polar residues" evidence="4">
    <location>
        <begin position="1"/>
        <end position="23"/>
    </location>
</feature>
<feature type="compositionally biased region" description="Polar residues" evidence="4">
    <location>
        <begin position="48"/>
        <end position="60"/>
    </location>
</feature>
<feature type="compositionally biased region" description="Polar residues" evidence="4">
    <location>
        <begin position="71"/>
        <end position="86"/>
    </location>
</feature>
<feature type="compositionally biased region" description="Polar residues" evidence="4">
    <location>
        <begin position="131"/>
        <end position="152"/>
    </location>
</feature>
<feature type="compositionally biased region" description="Low complexity" evidence="4">
    <location>
        <begin position="153"/>
        <end position="165"/>
    </location>
</feature>
<feature type="compositionally biased region" description="Basic and acidic residues" evidence="4">
    <location>
        <begin position="363"/>
        <end position="372"/>
    </location>
</feature>
<feature type="compositionally biased region" description="Polar residues" evidence="4">
    <location>
        <begin position="373"/>
        <end position="412"/>
    </location>
</feature>
<feature type="compositionally biased region" description="Low complexity" evidence="4">
    <location>
        <begin position="960"/>
        <end position="969"/>
    </location>
</feature>
<feature type="compositionally biased region" description="Polar residues" evidence="4">
    <location>
        <begin position="1005"/>
        <end position="1015"/>
    </location>
</feature>
<feature type="compositionally biased region" description="Basic and acidic residues" evidence="4">
    <location>
        <begin position="1038"/>
        <end position="1053"/>
    </location>
</feature>
<feature type="compositionally biased region" description="Polar residues" evidence="4">
    <location>
        <begin position="1054"/>
        <end position="1082"/>
    </location>
</feature>
<feature type="compositionally biased region" description="Polar residues" evidence="4">
    <location>
        <begin position="1095"/>
        <end position="1106"/>
    </location>
</feature>
<feature type="active site" description="For protease activity; shared with dimeric partner" evidence="3">
    <location>
        <position position="461"/>
    </location>
</feature>
<feature type="binding site" evidence="2">
    <location>
        <position position="671"/>
    </location>
    <ligand>
        <name>Mg(2+)</name>
        <dbReference type="ChEBI" id="CHEBI:18420"/>
        <label>1</label>
        <note>catalytic; for integrase activity</note>
    </ligand>
</feature>
<feature type="binding site" evidence="2">
    <location>
        <position position="736"/>
    </location>
    <ligand>
        <name>Mg(2+)</name>
        <dbReference type="ChEBI" id="CHEBI:18420"/>
        <label>1</label>
        <note>catalytic; for integrase activity</note>
    </ligand>
</feature>
<feature type="binding site" evidence="2">
    <location>
        <position position="1346"/>
    </location>
    <ligand>
        <name>Mg(2+)</name>
        <dbReference type="ChEBI" id="CHEBI:18420"/>
        <label>2</label>
        <note>catalytic; for reverse transcriptase activity</note>
    </ligand>
</feature>
<feature type="binding site" evidence="2">
    <location>
        <position position="1427"/>
    </location>
    <ligand>
        <name>Mg(2+)</name>
        <dbReference type="ChEBI" id="CHEBI:18420"/>
        <label>2</label>
        <note>catalytic; for reverse transcriptase activity</note>
    </ligand>
</feature>
<feature type="binding site" evidence="2">
    <location>
        <position position="1428"/>
    </location>
    <ligand>
        <name>Mg(2+)</name>
        <dbReference type="ChEBI" id="CHEBI:18420"/>
        <label>2</label>
        <note>catalytic; for reverse transcriptase activity</note>
    </ligand>
</feature>
<feature type="binding site" evidence="2">
    <location>
        <position position="1610"/>
    </location>
    <ligand>
        <name>Mg(2+)</name>
        <dbReference type="ChEBI" id="CHEBI:18420"/>
        <label>3</label>
        <note>catalytic; for RNase H activity</note>
    </ligand>
</feature>
<feature type="binding site" evidence="2">
    <location>
        <position position="1652"/>
    </location>
    <ligand>
        <name>Mg(2+)</name>
        <dbReference type="ChEBI" id="CHEBI:18420"/>
        <label>3</label>
        <note>catalytic; for RNase H activity</note>
    </ligand>
</feature>
<feature type="binding site" evidence="2">
    <location>
        <position position="1685"/>
    </location>
    <ligand>
        <name>Mg(2+)</name>
        <dbReference type="ChEBI" id="CHEBI:18420"/>
        <label>3</label>
        <note>catalytic; for RNase H activity</note>
    </ligand>
</feature>
<feature type="site" description="Cleavage; by Ty1 protease" evidence="1">
    <location>
        <begin position="401"/>
        <end position="402"/>
    </location>
</feature>
<feature type="site" description="Cleavage; by Ty1 protease" evidence="1">
    <location>
        <begin position="582"/>
        <end position="583"/>
    </location>
</feature>
<feature type="site" description="Cleavage; by Ty1 protease" evidence="1">
    <location>
        <begin position="1217"/>
        <end position="1218"/>
    </location>
</feature>
<dbReference type="EC" id="3.4.23.-"/>
<dbReference type="EC" id="2.7.7.49"/>
<dbReference type="EC" id="2.7.7.7"/>
<dbReference type="EC" id="3.1.26.4"/>
<dbReference type="EMBL" id="Z71560">
    <property type="protein sequence ID" value="CAA96196.1"/>
    <property type="molecule type" value="Genomic_DNA"/>
</dbReference>
<dbReference type="EMBL" id="Z71561">
    <property type="protein sequence ID" value="CAA96201.1"/>
    <property type="molecule type" value="Genomic_DNA"/>
</dbReference>
<dbReference type="EMBL" id="BK006947">
    <property type="protein sequence ID" value="DAA10274.1"/>
    <property type="molecule type" value="Genomic_DNA"/>
</dbReference>
<dbReference type="PIR" id="S40969">
    <property type="entry name" value="S40969"/>
</dbReference>
<dbReference type="PIR" id="S69969">
    <property type="entry name" value="S69969"/>
</dbReference>
<dbReference type="RefSeq" id="NP_058178.1">
    <molecule id="Q12112-1"/>
    <property type="nucleotide sequence ID" value="NM_001184415.2"/>
</dbReference>
<dbReference type="SMR" id="Q12112"/>
<dbReference type="BioGRID" id="35553">
    <property type="interactions" value="7"/>
</dbReference>
<dbReference type="FunCoup" id="Q12112">
    <property type="interactions" value="62"/>
</dbReference>
<dbReference type="IntAct" id="Q12112">
    <property type="interactions" value="2"/>
</dbReference>
<dbReference type="MINT" id="Q12112"/>
<dbReference type="GlyGen" id="Q12112">
    <property type="glycosylation" value="3 sites"/>
</dbReference>
<dbReference type="PaxDb" id="4932-YNL284C-B"/>
<dbReference type="PeptideAtlas" id="Q12112"/>
<dbReference type="TopDownProteomics" id="Q12112-1">
    <molecule id="Q12112-1"/>
</dbReference>
<dbReference type="GeneID" id="855433"/>
<dbReference type="KEGG" id="sce:YNL284C-B"/>
<dbReference type="AGR" id="SGD:S000007387"/>
<dbReference type="SGD" id="S000007387">
    <property type="gene designation" value="YNL284C-B"/>
</dbReference>
<dbReference type="VEuPathDB" id="FungiDB:YNL284C-B"/>
<dbReference type="eggNOG" id="KOG0017">
    <property type="taxonomic scope" value="Eukaryota"/>
</dbReference>
<dbReference type="HOGENOM" id="CLU_244151_0_0_1"/>
<dbReference type="InParanoid" id="Q12112"/>
<dbReference type="OrthoDB" id="5423336at2759"/>
<dbReference type="ChiTaRS" id="YNL284C-B">
    <property type="organism name" value="yeast"/>
</dbReference>
<dbReference type="Proteomes" id="UP000002311">
    <property type="component" value="Chromosome XIV"/>
</dbReference>
<dbReference type="RNAct" id="Q12112">
    <property type="molecule type" value="protein"/>
</dbReference>
<dbReference type="GO" id="GO:0005737">
    <property type="term" value="C:cytoplasm"/>
    <property type="evidence" value="ECO:0007669"/>
    <property type="project" value="UniProtKB-SubCell"/>
</dbReference>
<dbReference type="GO" id="GO:0005634">
    <property type="term" value="C:nucleus"/>
    <property type="evidence" value="ECO:0000314"/>
    <property type="project" value="SGD"/>
</dbReference>
<dbReference type="GO" id="GO:0004190">
    <property type="term" value="F:aspartic-type endopeptidase activity"/>
    <property type="evidence" value="ECO:0007669"/>
    <property type="project" value="UniProtKB-KW"/>
</dbReference>
<dbReference type="GO" id="GO:0005524">
    <property type="term" value="F:ATP binding"/>
    <property type="evidence" value="ECO:0007669"/>
    <property type="project" value="UniProtKB-KW"/>
</dbReference>
<dbReference type="GO" id="GO:0003677">
    <property type="term" value="F:DNA binding"/>
    <property type="evidence" value="ECO:0007669"/>
    <property type="project" value="UniProtKB-KW"/>
</dbReference>
<dbReference type="GO" id="GO:0003887">
    <property type="term" value="F:DNA-directed DNA polymerase activity"/>
    <property type="evidence" value="ECO:0007669"/>
    <property type="project" value="UniProtKB-KW"/>
</dbReference>
<dbReference type="GO" id="GO:0003723">
    <property type="term" value="F:RNA binding"/>
    <property type="evidence" value="ECO:0007669"/>
    <property type="project" value="UniProtKB-KW"/>
</dbReference>
<dbReference type="GO" id="GO:0003964">
    <property type="term" value="F:RNA-directed DNA polymerase activity"/>
    <property type="evidence" value="ECO:0007669"/>
    <property type="project" value="UniProtKB-KW"/>
</dbReference>
<dbReference type="GO" id="GO:0004523">
    <property type="term" value="F:RNA-DNA hybrid ribonuclease activity"/>
    <property type="evidence" value="ECO:0007669"/>
    <property type="project" value="UniProtKB-EC"/>
</dbReference>
<dbReference type="GO" id="GO:0008270">
    <property type="term" value="F:zinc ion binding"/>
    <property type="evidence" value="ECO:0007669"/>
    <property type="project" value="UniProtKB-KW"/>
</dbReference>
<dbReference type="GO" id="GO:0015074">
    <property type="term" value="P:DNA integration"/>
    <property type="evidence" value="ECO:0007669"/>
    <property type="project" value="UniProtKB-KW"/>
</dbReference>
<dbReference type="GO" id="GO:0006310">
    <property type="term" value="P:DNA recombination"/>
    <property type="evidence" value="ECO:0007669"/>
    <property type="project" value="UniProtKB-KW"/>
</dbReference>
<dbReference type="GO" id="GO:0006508">
    <property type="term" value="P:proteolysis"/>
    <property type="evidence" value="ECO:0007669"/>
    <property type="project" value="UniProtKB-KW"/>
</dbReference>
<dbReference type="GO" id="GO:0032196">
    <property type="term" value="P:transposition"/>
    <property type="evidence" value="ECO:0007669"/>
    <property type="project" value="UniProtKB-KW"/>
</dbReference>
<dbReference type="GO" id="GO:0075523">
    <property type="term" value="P:viral translational frameshifting"/>
    <property type="evidence" value="ECO:0007669"/>
    <property type="project" value="UniProtKB-KW"/>
</dbReference>
<dbReference type="CDD" id="cd09272">
    <property type="entry name" value="RNase_HI_RT_Ty1"/>
    <property type="match status" value="1"/>
</dbReference>
<dbReference type="FunFam" id="3.30.420.10:FF:000050">
    <property type="entry name" value="Transposon Ty2-DR3 Gag-Pol polyprotein"/>
    <property type="match status" value="1"/>
</dbReference>
<dbReference type="Gene3D" id="3.30.420.10">
    <property type="entry name" value="Ribonuclease H-like superfamily/Ribonuclease H"/>
    <property type="match status" value="1"/>
</dbReference>
<dbReference type="InterPro" id="IPR001969">
    <property type="entry name" value="Aspartic_peptidase_AS"/>
</dbReference>
<dbReference type="InterPro" id="IPR043502">
    <property type="entry name" value="DNA/RNA_pol_sf"/>
</dbReference>
<dbReference type="InterPro" id="IPR001584">
    <property type="entry name" value="Integrase_cat-core"/>
</dbReference>
<dbReference type="InterPro" id="IPR039537">
    <property type="entry name" value="Retrotran_Ty1/copia-like"/>
</dbReference>
<dbReference type="InterPro" id="IPR012337">
    <property type="entry name" value="RNaseH-like_sf"/>
</dbReference>
<dbReference type="InterPro" id="IPR036397">
    <property type="entry name" value="RNaseH_sf"/>
</dbReference>
<dbReference type="InterPro" id="IPR013103">
    <property type="entry name" value="RVT_2"/>
</dbReference>
<dbReference type="InterPro" id="IPR015820">
    <property type="entry name" value="TYA"/>
</dbReference>
<dbReference type="PANTHER" id="PTHR42648">
    <property type="entry name" value="TRANSPOSASE, PUTATIVE-RELATED"/>
    <property type="match status" value="1"/>
</dbReference>
<dbReference type="PANTHER" id="PTHR42648:SF11">
    <property type="entry name" value="TRANSPOSON TY4-P GAG-POL POLYPROTEIN"/>
    <property type="match status" value="1"/>
</dbReference>
<dbReference type="Pfam" id="PF00665">
    <property type="entry name" value="rve"/>
    <property type="match status" value="1"/>
</dbReference>
<dbReference type="Pfam" id="PF07727">
    <property type="entry name" value="RVT_2"/>
    <property type="match status" value="1"/>
</dbReference>
<dbReference type="Pfam" id="PF01021">
    <property type="entry name" value="TYA"/>
    <property type="match status" value="1"/>
</dbReference>
<dbReference type="SUPFAM" id="SSF56672">
    <property type="entry name" value="DNA/RNA polymerases"/>
    <property type="match status" value="1"/>
</dbReference>
<dbReference type="SUPFAM" id="SSF53098">
    <property type="entry name" value="Ribonuclease H-like"/>
    <property type="match status" value="1"/>
</dbReference>
<dbReference type="PROSITE" id="PS00141">
    <property type="entry name" value="ASP_PROTEASE"/>
    <property type="match status" value="1"/>
</dbReference>
<dbReference type="PROSITE" id="PS50994">
    <property type="entry name" value="INTEGRASE"/>
    <property type="match status" value="1"/>
</dbReference>
<organism>
    <name type="scientific">Saccharomyces cerevisiae (strain ATCC 204508 / S288c)</name>
    <name type="common">Baker's yeast</name>
    <dbReference type="NCBI Taxonomy" id="559292"/>
    <lineage>
        <taxon>Eukaryota</taxon>
        <taxon>Fungi</taxon>
        <taxon>Dikarya</taxon>
        <taxon>Ascomycota</taxon>
        <taxon>Saccharomycotina</taxon>
        <taxon>Saccharomycetes</taxon>
        <taxon>Saccharomycetales</taxon>
        <taxon>Saccharomycetaceae</taxon>
        <taxon>Saccharomyces</taxon>
    </lineage>
</organism>
<sequence>MESQQLSQHSPISHGSACASVTSKEVHTNQDPLDVSASKIQEYDKASTKANSQQTTTPASSAVPENPHHASPQTAQSHSPQNGPYQQQCMMTQNQANPSGWSFYGRPSMIPYTPYQMSPMYFPPGPHSQFPQYPSSVGTPLSTPSPESGNTFTDSSSADSDMTSTKKYVRPPPMLTSPNDFLNWVKTYIKFLQNSNLGDIIPTATRKAVRQMTDDELTFLCHTFQLFAPSQFLPTWVKDILSADYTDIMKILSKSINKMQSDTQEVNDITTLATLHYNGSTPADAFEAEVTNILDRLNNNGIPINNKVACQFIMRGLSGEYKFLRYARHRYIHMTVADLFSDIHSMYEEQQESKRNKSTYRRNPSDEKKDSRTYTNTTKPKSITRNSQKPNNSQSRTARAHNVSTSNNSSGPDNDLIRGSTTEPIQLKNKHDLHLGQELTESTVNHTNHSDDELPGHLLLDSGASRTLIRSAHHIHSASSNPGINVVDAQKRNIPINAIGDLQFHFQDNTKTSIKVLHTPNIAYDLLSLNELAAVDITACFTKNVLERSDGTVLAPIVKYGDFYWVSKKYLLPSNISVPTINNVHTSESTRKYPYPFIHRMLAHANAQTIRYSLKNNTITYFNESDVDWSSAIDYQCPDCLIGKSTKHRHIKGSRLKYQNSYEPFQYLHTDIFGPVHNLPKSAPSYFISFTDETTKFRWVYPLHDRREDSILDVFTTILAFIKNQFQASVLVIQMDRGSEYTNRTLHKFLEKNGITPCYTTTADSRAHGVAERLNRTLLDDCRTQLQCSGLPNHLWFSAIEFSTIVRNSLASPKSKKSARQHAGLAGLDISTLLPFGQPVIVNDHNPNSKIHPRGIPGYALHPSRNSYGYIIYLPSLKKTVDTTNYVILQGKESRLDQFNYDALTFDEDLNRLTASYQSFIASNEIQQSDDLNIESDHDFQSDIELHPEQPRNVLSKAVSPTDSTPPSTHTEDSKRVSKTNIRAPREVDPNISKSNILPSKKRSSTPQISDIESTGSGGMHRLDVPLLAPMSQYNTHESSHTSKSKDFRHSDSYSDNETNHTNVPISSTGGTNNKTVPQTSEQETEKRIIHRSPSIDTSSSESNSLHHVVPIKTSDTCPKENTEESIIADLPLPDLPPEPPTKLSDSFKELPPINSRQTNSSLGGIGDSNAYTTINSKKRSLEDNETEIKVSRDTWNTKNMRSLEPPRSKKRIHLIAAVKAVKSIKPIRTTLRYDEAITYNKDIKEKEKYIEAYHKEVNQLLKMKTWDTDRYYDRKEIDPKRVINSMFIFNRKRDGTHKARFVARGDIQHPDTYDSGMQSNTVHHYALMTSLSLALDNNYYITQLDISSAYLYADIKEELYIRPPPHLGMNDKLIRLKKSLYGLKQSGANWYETIKSYLIQQCGMEEVRGWSCVFKNSQVTICLFVDDMVLFSKNLNSNKRIIEKLKMQYDTKIINLGESDEEIQYDILGLEIKYQRGKYMKLGMENSLTEKIPKLNVPLNPKGRKLSAPGQPGLYIDQQELELEEDDYKMKVHEMQKLIGLASYVGYKFRFDLLYYINTLAQHILFPSKQVLDMTYELIQFIWNTRDKQLIWHKSKPVKPTNKLVVISDASYGNQPYYKSQIGNIYLLNGKVIGGKSTKASLTCTSTTEAEIHAISESVPLLNNLSYLIQELDKKPITKGLLTDSKSTISIIISNNEEKFRNRFFGTKAMRLRDEVSGNHLHVCYIETKKNIADVMTKPLPIKTFKLLTNKWIH</sequence>
<protein>
    <recommendedName>
        <fullName>Transposon Ty1-NL1 Gag-Pol polyprotein</fullName>
    </recommendedName>
    <alternativeName>
        <fullName>Gag-Pol-p199</fullName>
    </alternativeName>
    <alternativeName>
        <fullName>TY1A-TY1B</fullName>
    </alternativeName>
    <alternativeName>
        <fullName>Transposon Ty1 TYA-TYB polyprotein</fullName>
    </alternativeName>
    <alternativeName>
        <fullName>p190</fullName>
    </alternativeName>
    <component>
        <recommendedName>
            <fullName>Capsid protein</fullName>
            <shortName>CA</shortName>
        </recommendedName>
        <alternativeName>
            <fullName>Gag-p45</fullName>
        </alternativeName>
        <alternativeName>
            <fullName>p54</fullName>
        </alternativeName>
    </component>
    <component>
        <recommendedName>
            <fullName>Ty1 protease</fullName>
            <shortName>PR</shortName>
            <ecNumber>3.4.23.-</ecNumber>
        </recommendedName>
        <alternativeName>
            <fullName>Pol-p20</fullName>
        </alternativeName>
        <alternativeName>
            <fullName>p23</fullName>
        </alternativeName>
    </component>
    <component>
        <recommendedName>
            <fullName>Integrase</fullName>
            <shortName>IN</shortName>
        </recommendedName>
        <alternativeName>
            <fullName>Pol-p71</fullName>
        </alternativeName>
        <alternativeName>
            <fullName>p84</fullName>
        </alternativeName>
        <alternativeName>
            <fullName>p90</fullName>
        </alternativeName>
    </component>
    <component>
        <recommendedName>
            <fullName>Reverse transcriptase/ribonuclease H</fullName>
            <shortName>RT</shortName>
            <shortName>RT-RH</shortName>
            <ecNumber>2.7.7.49</ecNumber>
            <ecNumber>2.7.7.7</ecNumber>
            <ecNumber>3.1.26.4</ecNumber>
        </recommendedName>
        <alternativeName>
            <fullName>Pol-p63</fullName>
        </alternativeName>
        <alternativeName>
            <fullName>p60</fullName>
        </alternativeName>
    </component>
</protein>